<reference key="1">
    <citation type="submission" date="2007-06" db="EMBL/GenBank/DDBJ databases">
        <authorList>
            <person name="Brinkac L.M."/>
            <person name="Daugherty S."/>
            <person name="Dodson R.J."/>
            <person name="Madupu R."/>
            <person name="Brown J.L."/>
            <person name="Bruce D."/>
            <person name="Detter C."/>
            <person name="Munk C."/>
            <person name="Smith L.A."/>
            <person name="Smith T.J."/>
            <person name="White O."/>
            <person name="Brettin T.S."/>
        </authorList>
    </citation>
    <scope>NUCLEOTIDE SEQUENCE [LARGE SCALE GENOMIC DNA]</scope>
    <source>
        <strain>Langeland / NCTC 10281 / Type F</strain>
    </source>
</reference>
<gene>
    <name evidence="1" type="primary">cinA</name>
    <name type="ordered locus">CLI_0276</name>
</gene>
<sequence length="409" mass="45063">MKAEILCVGTELLLGDIVNTNAQYISKELANIGIEVYHHSVIGDNENRLLKELERAFNYCDLVITTGGLGPTKDDLTKESVAKFFQEDLVLHEKSLKQIEKRLLCFNKSMTESNKKQAYFPKNCEILENPNGTAPGFIIEKDNKIAIILPGPPYEMQPMFEKKVMPYLEKLTNCTIKSKVLRITGIGESDVADLISDILESQTNPTVAPYAKQGETTLRITAKANSEEKALNLIVPIEKKIRQILEDNIYGSGETSLEEVIANILVKRNLTIATAESCTGGLLAGKLINFPGISSVFLEGAITYSNESKINRLNVKKETLEKYTAVSKEVALEMAEGIAKSSGTNIGISTTGVAGPGGGTYDKPIGLVYIGLYINGKTFVKELNYSGNRQFIRNITVTRALDFLRRNLK</sequence>
<proteinExistence type="inferred from homology"/>
<organism>
    <name type="scientific">Clostridium botulinum (strain Langeland / NCTC 10281 / Type F)</name>
    <dbReference type="NCBI Taxonomy" id="441772"/>
    <lineage>
        <taxon>Bacteria</taxon>
        <taxon>Bacillati</taxon>
        <taxon>Bacillota</taxon>
        <taxon>Clostridia</taxon>
        <taxon>Eubacteriales</taxon>
        <taxon>Clostridiaceae</taxon>
        <taxon>Clostridium</taxon>
    </lineage>
</organism>
<dbReference type="EMBL" id="CP000728">
    <property type="protein sequence ID" value="ABS40229.1"/>
    <property type="molecule type" value="Genomic_DNA"/>
</dbReference>
<dbReference type="RefSeq" id="WP_011987278.1">
    <property type="nucleotide sequence ID" value="NC_009699.1"/>
</dbReference>
<dbReference type="SMR" id="A7G9W4"/>
<dbReference type="KEGG" id="cbf:CLI_0276"/>
<dbReference type="HOGENOM" id="CLU_030805_9_3_9"/>
<dbReference type="Proteomes" id="UP000002410">
    <property type="component" value="Chromosome"/>
</dbReference>
<dbReference type="CDD" id="cd00885">
    <property type="entry name" value="cinA"/>
    <property type="match status" value="1"/>
</dbReference>
<dbReference type="Gene3D" id="3.30.70.2860">
    <property type="match status" value="1"/>
</dbReference>
<dbReference type="Gene3D" id="3.90.950.20">
    <property type="entry name" value="CinA-like"/>
    <property type="match status" value="1"/>
</dbReference>
<dbReference type="Gene3D" id="3.40.980.10">
    <property type="entry name" value="MoaB/Mog-like domain"/>
    <property type="match status" value="1"/>
</dbReference>
<dbReference type="HAMAP" id="MF_00226_B">
    <property type="entry name" value="CinA_B"/>
    <property type="match status" value="1"/>
</dbReference>
<dbReference type="InterPro" id="IPR050101">
    <property type="entry name" value="CinA"/>
</dbReference>
<dbReference type="InterPro" id="IPR036653">
    <property type="entry name" value="CinA-like_C"/>
</dbReference>
<dbReference type="InterPro" id="IPR008136">
    <property type="entry name" value="CinA_C"/>
</dbReference>
<dbReference type="InterPro" id="IPR041424">
    <property type="entry name" value="CinA_KH"/>
</dbReference>
<dbReference type="InterPro" id="IPR008135">
    <property type="entry name" value="Competence-induced_CinA"/>
</dbReference>
<dbReference type="InterPro" id="IPR036425">
    <property type="entry name" value="MoaB/Mog-like_dom_sf"/>
</dbReference>
<dbReference type="InterPro" id="IPR001453">
    <property type="entry name" value="MoaB/Mog_dom"/>
</dbReference>
<dbReference type="NCBIfam" id="TIGR00200">
    <property type="entry name" value="cinA_nterm"/>
    <property type="match status" value="1"/>
</dbReference>
<dbReference type="NCBIfam" id="TIGR00177">
    <property type="entry name" value="molyb_syn"/>
    <property type="match status" value="1"/>
</dbReference>
<dbReference type="NCBIfam" id="TIGR00199">
    <property type="entry name" value="PncC_domain"/>
    <property type="match status" value="1"/>
</dbReference>
<dbReference type="NCBIfam" id="NF001813">
    <property type="entry name" value="PRK00549.1"/>
    <property type="match status" value="1"/>
</dbReference>
<dbReference type="PANTHER" id="PTHR13939">
    <property type="entry name" value="NICOTINAMIDE-NUCLEOTIDE AMIDOHYDROLASE PNCC"/>
    <property type="match status" value="1"/>
</dbReference>
<dbReference type="PANTHER" id="PTHR13939:SF0">
    <property type="entry name" value="NMN AMIDOHYDROLASE-LIKE PROTEIN YFAY"/>
    <property type="match status" value="1"/>
</dbReference>
<dbReference type="Pfam" id="PF02464">
    <property type="entry name" value="CinA"/>
    <property type="match status" value="1"/>
</dbReference>
<dbReference type="Pfam" id="PF18146">
    <property type="entry name" value="CinA_KH"/>
    <property type="match status" value="1"/>
</dbReference>
<dbReference type="Pfam" id="PF00994">
    <property type="entry name" value="MoCF_biosynth"/>
    <property type="match status" value="1"/>
</dbReference>
<dbReference type="PIRSF" id="PIRSF006728">
    <property type="entry name" value="CinA"/>
    <property type="match status" value="1"/>
</dbReference>
<dbReference type="SMART" id="SM00852">
    <property type="entry name" value="MoCF_biosynth"/>
    <property type="match status" value="1"/>
</dbReference>
<dbReference type="SUPFAM" id="SSF142433">
    <property type="entry name" value="CinA-like"/>
    <property type="match status" value="1"/>
</dbReference>
<dbReference type="SUPFAM" id="SSF53218">
    <property type="entry name" value="Molybdenum cofactor biosynthesis proteins"/>
    <property type="match status" value="1"/>
</dbReference>
<accession>A7G9W4</accession>
<name>CINA_CLOBL</name>
<evidence type="ECO:0000255" key="1">
    <source>
        <dbReference type="HAMAP-Rule" id="MF_00226"/>
    </source>
</evidence>
<protein>
    <recommendedName>
        <fullName evidence="1">Putative competence-damage inducible protein</fullName>
    </recommendedName>
</protein>
<feature type="chain" id="PRO_1000058698" description="Putative competence-damage inducible protein">
    <location>
        <begin position="1"/>
        <end position="409"/>
    </location>
</feature>
<comment type="similarity">
    <text evidence="1">Belongs to the CinA family.</text>
</comment>